<keyword id="KW-0256">Endoplasmic reticulum</keyword>
<keyword id="KW-0434">Leukotriene biosynthesis</keyword>
<keyword id="KW-0472">Membrane</keyword>
<keyword id="KW-0539">Nucleus</keyword>
<keyword id="KW-1185">Reference proteome</keyword>
<keyword id="KW-0812">Transmembrane</keyword>
<keyword id="KW-1133">Transmembrane helix</keyword>
<dbReference type="EMBL" id="M96552">
    <property type="protein sequence ID" value="AAA30946.1"/>
    <property type="molecule type" value="mRNA"/>
</dbReference>
<dbReference type="SMR" id="P30353"/>
<dbReference type="STRING" id="9796.ENSECAP00000033016"/>
<dbReference type="HOGENOM" id="CLU_110291_0_0_1"/>
<dbReference type="InParanoid" id="P30353"/>
<dbReference type="Proteomes" id="UP000002281">
    <property type="component" value="Unplaced"/>
</dbReference>
<dbReference type="GO" id="GO:0005783">
    <property type="term" value="C:endoplasmic reticulum"/>
    <property type="evidence" value="ECO:0000318"/>
    <property type="project" value="GO_Central"/>
</dbReference>
<dbReference type="GO" id="GO:0005789">
    <property type="term" value="C:endoplasmic reticulum membrane"/>
    <property type="evidence" value="ECO:0007669"/>
    <property type="project" value="UniProtKB-SubCell"/>
</dbReference>
<dbReference type="GO" id="GO:0005635">
    <property type="term" value="C:nuclear envelope"/>
    <property type="evidence" value="ECO:0000250"/>
    <property type="project" value="UniProtKB"/>
</dbReference>
<dbReference type="GO" id="GO:0031965">
    <property type="term" value="C:nuclear membrane"/>
    <property type="evidence" value="ECO:0000250"/>
    <property type="project" value="UniProtKB"/>
</dbReference>
<dbReference type="GO" id="GO:0050544">
    <property type="term" value="F:arachidonate binding"/>
    <property type="evidence" value="ECO:0000250"/>
    <property type="project" value="UniProtKB"/>
</dbReference>
<dbReference type="GO" id="GO:0008047">
    <property type="term" value="F:enzyme activator activity"/>
    <property type="evidence" value="ECO:0007669"/>
    <property type="project" value="InterPro"/>
</dbReference>
<dbReference type="GO" id="GO:0004602">
    <property type="term" value="F:glutathione peroxidase activity"/>
    <property type="evidence" value="ECO:0000318"/>
    <property type="project" value="GO_Central"/>
</dbReference>
<dbReference type="GO" id="GO:0004364">
    <property type="term" value="F:glutathione transferase activity"/>
    <property type="evidence" value="ECO:0000318"/>
    <property type="project" value="GO_Central"/>
</dbReference>
<dbReference type="GO" id="GO:0004464">
    <property type="term" value="F:leukotriene-C4 synthase activity"/>
    <property type="evidence" value="ECO:0000318"/>
    <property type="project" value="GO_Central"/>
</dbReference>
<dbReference type="GO" id="GO:0019370">
    <property type="term" value="P:leukotriene biosynthetic process"/>
    <property type="evidence" value="ECO:0000318"/>
    <property type="project" value="GO_Central"/>
</dbReference>
<dbReference type="FunFam" id="1.20.120.550:FF:000003">
    <property type="entry name" value="Leukotriene C4 synthase"/>
    <property type="match status" value="1"/>
</dbReference>
<dbReference type="Gene3D" id="1.20.120.550">
    <property type="entry name" value="Membrane associated eicosanoid/glutathione metabolism-like domain"/>
    <property type="match status" value="1"/>
</dbReference>
<dbReference type="InterPro" id="IPR001446">
    <property type="entry name" value="5_LipOase_AP"/>
</dbReference>
<dbReference type="InterPro" id="IPR018295">
    <property type="entry name" value="FLAP/GST2/LTC4S_CS"/>
</dbReference>
<dbReference type="InterPro" id="IPR050997">
    <property type="entry name" value="MAPEG"/>
</dbReference>
<dbReference type="InterPro" id="IPR023352">
    <property type="entry name" value="MAPEG-like_dom_sf"/>
</dbReference>
<dbReference type="InterPro" id="IPR001129">
    <property type="entry name" value="Membr-assoc_MAPEG"/>
</dbReference>
<dbReference type="PANTHER" id="PTHR10250:SF2">
    <property type="entry name" value="ARACHIDONATE 5-LIPOXYGENASE-ACTIVATING PROTEIN"/>
    <property type="match status" value="1"/>
</dbReference>
<dbReference type="PANTHER" id="PTHR10250">
    <property type="entry name" value="MICROSOMAL GLUTATHIONE S-TRANSFERASE"/>
    <property type="match status" value="1"/>
</dbReference>
<dbReference type="Pfam" id="PF01124">
    <property type="entry name" value="MAPEG"/>
    <property type="match status" value="1"/>
</dbReference>
<dbReference type="PRINTS" id="PR00488">
    <property type="entry name" value="5LPOXGNASEAP"/>
</dbReference>
<dbReference type="SUPFAM" id="SSF161084">
    <property type="entry name" value="MAPEG domain-like"/>
    <property type="match status" value="1"/>
</dbReference>
<dbReference type="PROSITE" id="PS01297">
    <property type="entry name" value="FLAP_GST2_LTC4S"/>
    <property type="match status" value="1"/>
</dbReference>
<gene>
    <name type="primary">ALOX5AP</name>
    <name type="synonym">FLAP</name>
</gene>
<protein>
    <recommendedName>
        <fullName>Arachidonate 5-lipoxygenase-activating protein</fullName>
    </recommendedName>
    <alternativeName>
        <fullName>FLAP</fullName>
    </alternativeName>
    <alternativeName>
        <fullName>MK-886-binding protein</fullName>
    </alternativeName>
</protein>
<proteinExistence type="evidence at transcript level"/>
<comment type="function">
    <text evidence="1">Required for leukotriene biosynthesis by ALOX5 (5-lipoxygenase). Anchors ALOX5 to the membrane. Binds arachidonic acid, and could play an essential role in the transfer of arachidonic acid to ALOX5. Binds to MK-886, a compound that blocks the biosynthesis of leukotrienes (By similarity).</text>
</comment>
<comment type="subunit">
    <text evidence="1">Homotrimer. Interacts with LTC4S and ALOX5 (By similarity).</text>
</comment>
<comment type="subcellular location">
    <subcellularLocation>
        <location evidence="1">Nucleus membrane</location>
        <topology evidence="1">Multi-pass membrane protein</topology>
    </subcellularLocation>
    <subcellularLocation>
        <location evidence="1">Endoplasmic reticulum membrane</location>
        <topology evidence="1">Multi-pass membrane protein</topology>
    </subcellularLocation>
</comment>
<comment type="domain">
    <text evidence="1">The C-terminal part after residue 140 is mostly disordered.</text>
</comment>
<comment type="similarity">
    <text evidence="2">Belongs to the MAPEG family.</text>
</comment>
<name>AL5AP_HORSE</name>
<accession>P30353</accession>
<organism>
    <name type="scientific">Equus caballus</name>
    <name type="common">Horse</name>
    <dbReference type="NCBI Taxonomy" id="9796"/>
    <lineage>
        <taxon>Eukaryota</taxon>
        <taxon>Metazoa</taxon>
        <taxon>Chordata</taxon>
        <taxon>Craniata</taxon>
        <taxon>Vertebrata</taxon>
        <taxon>Euteleostomi</taxon>
        <taxon>Mammalia</taxon>
        <taxon>Eutheria</taxon>
        <taxon>Laurasiatheria</taxon>
        <taxon>Perissodactyla</taxon>
        <taxon>Equidae</taxon>
        <taxon>Equus</taxon>
    </lineage>
</organism>
<feature type="chain" id="PRO_0000217750" description="Arachidonate 5-lipoxygenase-activating protein">
    <location>
        <begin position="1"/>
        <end position="153" status="greater than"/>
    </location>
</feature>
<feature type="topological domain" description="Lumenal" evidence="1">
    <location>
        <begin position="1"/>
        <end position="8"/>
    </location>
</feature>
<feature type="transmembrane region" description="Helical" evidence="1">
    <location>
        <begin position="9"/>
        <end position="30"/>
    </location>
</feature>
<feature type="topological domain" description="Cytoplasmic" evidence="1">
    <location>
        <begin position="31"/>
        <end position="52"/>
    </location>
</feature>
<feature type="transmembrane region" description="Helical" evidence="1">
    <location>
        <begin position="53"/>
        <end position="77"/>
    </location>
</feature>
<feature type="topological domain" description="Lumenal" evidence="1">
    <location>
        <begin position="78"/>
        <end position="80"/>
    </location>
</feature>
<feature type="transmembrane region" description="Helical" evidence="1">
    <location>
        <begin position="81"/>
        <end position="102"/>
    </location>
</feature>
<feature type="topological domain" description="Cytoplasmic" evidence="1">
    <location>
        <begin position="103"/>
        <end position="107"/>
    </location>
</feature>
<feature type="intramembrane region" evidence="1">
    <location>
        <begin position="108"/>
        <end position="115"/>
    </location>
</feature>
<feature type="transmembrane region" description="Helical" evidence="1">
    <location>
        <begin position="116"/>
        <end position="128"/>
    </location>
</feature>
<feature type="topological domain" description="Lumenal" evidence="1">
    <location>
        <begin position="129"/>
        <end position="153"/>
    </location>
</feature>
<feature type="non-terminal residue">
    <location>
        <position position="153"/>
    </location>
</feature>
<evidence type="ECO:0000250" key="1"/>
<evidence type="ECO:0000305" key="2"/>
<sequence>MDQETVGNVVLLAIVTLISVIQNGFFAHKVEHESKTQNGRSFQRTGTLAFERVYTANQNCVDAYPTFLVMLWSAGLLCSQVPAAFAGLMYLFVRQKYFVGYLGERRQSTPGYIFGKRIILFLFLMSLAGIFNYYLILFFGSDFENYIKTITTT</sequence>
<reference key="1">
    <citation type="journal article" date="1992" name="Mol. Pharmacol.">
        <title>Cross-species comparison of 5-lipoxygenase-activating protein.</title>
        <authorList>
            <person name="Vickers P.J."/>
            <person name="O'Neill G.P."/>
            <person name="Mancini J.A."/>
            <person name="Charleson S."/>
            <person name="Abramovitz M."/>
        </authorList>
    </citation>
    <scope>NUCLEOTIDE SEQUENCE [MRNA]</scope>
</reference>